<proteinExistence type="evidence at protein level"/>
<sequence length="525" mass="59578">MKALIAALLLITLQYSCAVSPTDCSAVEPEAEKALDLINKRRRDGYLFQLLRIADAHLDRVENTTVYYLVLDVQESDCSVLSRKYWNDCEPPDSRRPSEIVIGQCKVIATRHSHESQDLRVIDFNCTTSSVSSALANTKDSPVLIDFFEDTERYRKQANKALEKYKEENDDFASFRVDRIERVARVRGGEGTGYFVDFSVRNCPRHHFPRHPNVFGFCRADLFYDVEALDLESPKNLVINCEVFDPQEHENINGVPPHLGHPFHWGGHERSSTTKPPFKPHGSRDHHHPHKPHEHGPPPPPDERDHSHGPPLPQGPPPLLPMSCSSCQHATFGTNGAQRHSHNNNSSDLHPHKHHSHEQHPHGHHPHAHHPHEHDTHRQHPHGHHPHGHHPHGHHPHGHHPHGHHPHCHDFQDYGPCDPPPHNQGHCCHGHGPPPGHLRRRGPGKGPRPFHCRQIGSVYRLPPLRKGEVLPLPEANFPSFPLPHHKHPLKPDNQPFPQSVSESCPGKFKSGFPQVSMFFTHTFPK</sequence>
<accession>P04196</accession>
<accession>B9EK35</accession>
<accession>D3DNU7</accession>
<reference key="1">
    <citation type="journal article" date="1986" name="Biochemistry">
        <title>Amino acid sequence of human histidine-rich glycoprotein derived from the nucleotide sequence of its cDNA.</title>
        <authorList>
            <person name="Koide T."/>
            <person name="Foster D.C."/>
            <person name="Yoshitake S."/>
            <person name="Davie E.W."/>
        </authorList>
    </citation>
    <scope>NUCLEOTIDE SEQUENCE [MRNA]</scope>
    <source>
        <tissue>Liver</tissue>
    </source>
</reference>
<reference key="2">
    <citation type="submission" date="1997-07" db="EMBL/GenBank/DDBJ databases">
        <authorList>
            <person name="Wakabayashi S."/>
            <person name="Takahashi K."/>
            <person name="Tokunaga F."/>
            <person name="Koide T."/>
        </authorList>
    </citation>
    <scope>NUCLEOTIDE SEQUENCE [GENOMIC DNA]</scope>
</reference>
<reference key="3">
    <citation type="submission" date="2005-09" db="EMBL/GenBank/DDBJ databases">
        <authorList>
            <person name="Mural R.J."/>
            <person name="Istrail S."/>
            <person name="Sutton G.G."/>
            <person name="Florea L."/>
            <person name="Halpern A.L."/>
            <person name="Mobarry C.M."/>
            <person name="Lippert R."/>
            <person name="Walenz B."/>
            <person name="Shatkay H."/>
            <person name="Dew I."/>
            <person name="Miller J.R."/>
            <person name="Flanigan M.J."/>
            <person name="Edwards N.J."/>
            <person name="Bolanos R."/>
            <person name="Fasulo D."/>
            <person name="Halldorsson B.V."/>
            <person name="Hannenhalli S."/>
            <person name="Turner R."/>
            <person name="Yooseph S."/>
            <person name="Lu F."/>
            <person name="Nusskern D.R."/>
            <person name="Shue B.C."/>
            <person name="Zheng X.H."/>
            <person name="Zhong F."/>
            <person name="Delcher A.L."/>
            <person name="Huson D.H."/>
            <person name="Kravitz S.A."/>
            <person name="Mouchard L."/>
            <person name="Reinert K."/>
            <person name="Remington K.A."/>
            <person name="Clark A.G."/>
            <person name="Waterman M.S."/>
            <person name="Eichler E.E."/>
            <person name="Adams M.D."/>
            <person name="Hunkapiller M.W."/>
            <person name="Myers E.W."/>
            <person name="Venter J.C."/>
        </authorList>
    </citation>
    <scope>NUCLEOTIDE SEQUENCE [LARGE SCALE GENOMIC DNA]</scope>
</reference>
<reference key="4">
    <citation type="journal article" date="2004" name="Genome Res.">
        <title>The status, quality, and expansion of the NIH full-length cDNA project: the Mammalian Gene Collection (MGC).</title>
        <authorList>
            <consortium name="The MGC Project Team"/>
        </authorList>
    </citation>
    <scope>NUCLEOTIDE SEQUENCE [LARGE SCALE MRNA]</scope>
    <source>
        <tissue>Testis</tissue>
    </source>
</reference>
<reference key="5">
    <citation type="journal article" date="1994" name="Genomics">
        <title>Evidence for the absence of intron H of the histidine-rich glycoprotein (HRG) gene: genetic mapping and in situ localization of HRG to chromosome 3q28-q29.</title>
        <authorList>
            <person name="Hennis B.C."/>
            <person name="Frants R.R."/>
            <person name="Bakker E."/>
            <person name="Vossen R.H."/>
            <person name="van der Poort E.W."/>
            <person name="Blonden L.A."/>
            <person name="Cox S."/>
            <person name="Khan P.M."/>
            <person name="Spurr N.K."/>
            <person name="Kluft C."/>
        </authorList>
    </citation>
    <scope>NUCLEOTIDE SEQUENCE [GENOMIC DNA] OF 214-247</scope>
</reference>
<reference key="6">
    <citation type="journal article" date="1992" name="Electrophoresis">
        <title>Plasma protein map: an update by microsequencing.</title>
        <authorList>
            <person name="Hughes G.J."/>
            <person name="Frutiger S."/>
            <person name="Paquet N."/>
            <person name="Ravier F."/>
            <person name="Pasquali C."/>
            <person name="Sanchez J.-C."/>
            <person name="James R."/>
            <person name="Tissot J.-D."/>
            <person name="Bjellqvist B."/>
            <person name="Hochstrasser D.F."/>
        </authorList>
    </citation>
    <scope>PROTEIN SEQUENCE OF 19-27</scope>
    <source>
        <tissue>Plasma</tissue>
    </source>
</reference>
<reference key="7">
    <citation type="journal article" date="1978" name="Biochim. Biophys. Acta">
        <title>Human serum histidine-rich glycoprotein. I. Interactions with heme, metal ions and organic ligands.</title>
        <authorList>
            <person name="Morgan W.T."/>
        </authorList>
    </citation>
    <scope>HEME- AND METAL-BINDING</scope>
</reference>
<reference key="8">
    <citation type="journal article" date="1999" name="J. Biol. Chem.">
        <title>Differential binding of histidine-rich glycoprotein (HRG) to human IgG subclasses and IgG molecules containing kappa and lambda light chains.</title>
        <authorList>
            <person name="Gorgani N.N."/>
            <person name="Parish C.R."/>
            <person name="Altin J.G."/>
        </authorList>
    </citation>
    <scope>INTERACTION WITH IMMUNOGLOBULIN G SUBCLASSES</scope>
</reference>
<reference key="9">
    <citation type="journal article" date="2001" name="J. Clin. Invest.">
        <title>Histidine-rich glycoprotein inhibits the antiangiogenic effect of thrombospondin-1.</title>
        <authorList>
            <person name="Simantov R."/>
            <person name="Febbraio M."/>
            <person name="Crombie R."/>
            <person name="Asch A.S."/>
            <person name="Nachman R.L."/>
            <person name="Silverstein R.L."/>
        </authorList>
    </citation>
    <scope>INTERACTION WITH THBS1</scope>
    <scope>FUNCTION</scope>
</reference>
<reference key="10">
    <citation type="journal article" date="2002" name="Cancer Res.">
        <title>Histidine-proline-rich glycoprotein has potent antiangiogenic activity mediated through the histidine-proline-rich domain.</title>
        <authorList>
            <person name="Juarez J.C."/>
            <person name="Guan X."/>
            <person name="Shipulina N.V."/>
            <person name="Plunkett M.L."/>
            <person name="Parry G.C."/>
            <person name="Shaw D.E."/>
            <person name="Zhang J.C."/>
            <person name="Rabbani S.A."/>
            <person name="McCrae K.R."/>
            <person name="Mazar A.P."/>
            <person name="Morgan W.T."/>
            <person name="Donate F."/>
        </authorList>
    </citation>
    <scope>FUNCTION OF HIS/PRO-RICH DOMAIN</scope>
</reference>
<reference key="11">
    <citation type="journal article" date="2004" name="Cancer Res.">
        <title>A fragment of histidine-rich glycoprotein is a potent inhibitor of tumor vascularization.</title>
        <authorList>
            <person name="Olsson A.K."/>
            <person name="Larsson H."/>
            <person name="Dixelius J."/>
            <person name="Johansson I."/>
            <person name="Lee C."/>
            <person name="Oellig C."/>
            <person name="Bjork I."/>
            <person name="Claesson-Welsh L."/>
        </authorList>
    </citation>
    <scope>FUNCTION AS A NEGATIVE REGULATOR OF ANGIOGENESIS</scope>
    <scope>PROTEOLYTIC PROCESSING</scope>
    <scope>TISSUE SPECIFICITY</scope>
</reference>
<reference key="12">
    <citation type="journal article" date="2004" name="Cancer Res.">
        <title>Peptides derived from the histidine-proline domain of the histidine-proline-rich glycoprotein bind to tropomyosin and have antiangiogenic and antitumor activities.</title>
        <authorList>
            <person name="Donate F."/>
            <person name="Juarez J.C."/>
            <person name="Guan X."/>
            <person name="Shipulina N.V."/>
            <person name="Plunkett M.L."/>
            <person name="Tel-Tsur Z."/>
            <person name="Shaw D.E."/>
            <person name="Morgan W.T."/>
            <person name="Mazar A.P."/>
        </authorList>
    </citation>
    <scope>FUNCTION OF THE HIS/PRO-RICH REGION</scope>
    <scope>INTERACTION WITH TPM1</scope>
</reference>
<reference key="13">
    <citation type="journal article" date="2004" name="J. Biol. Chem.">
        <title>Histidine-rich glycoprotein binds to cell-surface heparan sulfate via its N-terminal domain following Zn2+ chelation.</title>
        <authorList>
            <person name="Jones A.L."/>
            <person name="Hulett M.D."/>
            <person name="Parish C.R."/>
        </authorList>
    </citation>
    <scope>HEPARAN SULFATE-BINDING</scope>
    <scope>METAL-BINDING</scope>
</reference>
<reference key="14">
    <citation type="journal article" date="2004" name="J. Biol. Chem.">
        <title>Plasminogen is tethered with high affinity to the cell surface by the plasma protein, histidine-rich glycoprotein.</title>
        <authorList>
            <person name="Jones A.L."/>
            <person name="Hulett M.D."/>
            <person name="Altin J.G."/>
            <person name="Hogg P."/>
            <person name="Parish C.R."/>
        </authorList>
    </citation>
    <scope>INTERACTION WITH PLG</scope>
    <scope>FUNCTION</scope>
</reference>
<reference key="15">
    <citation type="journal article" date="2005" name="J. Proteome Res.">
        <title>Human plasma N-glycoproteome analysis by immunoaffinity subtraction, hydrazide chemistry, and mass spectrometry.</title>
        <authorList>
            <person name="Liu T."/>
            <person name="Qian W.-J."/>
            <person name="Gritsenko M.A."/>
            <person name="Camp D.G. II"/>
            <person name="Monroe M.E."/>
            <person name="Moore R.J."/>
            <person name="Smith R.D."/>
        </authorList>
    </citation>
    <scope>GLYCOSYLATION [LARGE SCALE ANALYSIS] AT ASN-63; ASN-125 AND ASN-344</scope>
    <source>
        <tissue>Plasma</tissue>
    </source>
</reference>
<reference key="16">
    <citation type="journal article" date="2006" name="Cancer Res.">
        <title>Minimal active domain and mechanism of action of the angiogenesis inhibitor histidine-rich glycoprotein.</title>
        <authorList>
            <person name="Dixelius J."/>
            <person name="Olsson A.K."/>
            <person name="Thulin A."/>
            <person name="Lee C."/>
            <person name="Johansson I."/>
            <person name="Claesson-Welsh L."/>
        </authorList>
    </citation>
    <scope>FUNCTION OF THE HIS/PRO-RICH REGION AS A NEGATIVE REGULATOR OF ANGIOGENESIS</scope>
</reference>
<reference key="17">
    <citation type="journal article" date="2006" name="J. Biol. Chem.">
        <title>The anti-angiogenic His/Pro-rich fragment of histidine-rich glycoprotein binds to endothelial cell heparan sulfate in a Zn2+-dependent manner.</title>
        <authorList>
            <person name="Vanwildemeersch M."/>
            <person name="Olsson A.K."/>
            <person name="Gottfridsson E."/>
            <person name="Claesson-Welsh L."/>
            <person name="Lindahl U."/>
            <person name="Spillmann D."/>
        </authorList>
    </citation>
    <scope>FUNCTION OF THE HIS/PRO-RICH REGION AS A NEGATIVE REGULATOR OF ANGIOGENESIS</scope>
    <scope>COFACTOR</scope>
    <scope>ZINC-BINDING</scope>
    <scope>HEPARIN- AND HEPARAN SULFATE-BINDING</scope>
</reference>
<reference key="18">
    <citation type="journal article" date="2009" name="Biochem. J.">
        <title>Regulation of histidine-rich glycoprotein (HRG) function via plasmin-mediated proteolytic cleavage.</title>
        <authorList>
            <person name="Poon I.K."/>
            <person name="Olsson A.K."/>
            <person name="Hulett M.D."/>
            <person name="Parish C.R."/>
        </authorList>
    </citation>
    <scope>PROTEOLYTIC PROCESSING</scope>
    <scope>HEPARAN SULFATE-BINDING</scope>
    <scope>INTERACTION WITH PLG</scope>
    <scope>FUNCTION</scope>
</reference>
<reference key="19">
    <citation type="journal article" date="2009" name="Biochim. Biophys. Acta">
        <title>High affinity interaction between histidine-rich glycoprotein and the cell surface type ATP synthase on T-cells.</title>
        <authorList>
            <person name="Ohta T."/>
            <person name="Ikemoto Y."/>
            <person name="Usami A."/>
            <person name="Koide T."/>
            <person name="Wakabayashi S."/>
        </authorList>
    </citation>
    <scope>INTERACTION WITH ATP5F1A</scope>
    <scope>FUNCTION</scope>
    <scope>GLYCOSYLATION AT ASN-63</scope>
    <scope>IDENTIFICATION BY MASS SPECTROMETRY</scope>
</reference>
<reference key="20">
    <citation type="journal article" date="2009" name="Cell. Immunol.">
        <title>Histidine-rich glycoprotein and concanavalin A synergistically stimulate the phosphatidylinositol 3-kinase-independent signaling pathway in leukocytes leading to increased cell adhesion and changes in cell morphology.</title>
        <authorList>
            <person name="Ohta T."/>
            <person name="Ikemoto Y."/>
            <person name="Saeki K."/>
            <person name="Koide T."/>
            <person name="Wakabayashi S."/>
        </authorList>
    </citation>
    <scope>FUNCTION</scope>
</reference>
<reference key="21">
    <citation type="journal article" date="2009" name="J. Inorg. Biochem.">
        <title>Probing the Cu(2+) and Zn(2+) binding affinity of histidine-rich glycoprotein.</title>
        <authorList>
            <person name="Jancso A."/>
            <person name="Kolozsi A."/>
            <person name="Gyurcsik B."/>
            <person name="Nagy N.V."/>
            <person name="Gajda T."/>
        </authorList>
    </citation>
    <scope>METAL-BINDING</scope>
</reference>
<reference key="22">
    <citation type="journal article" date="2009" name="J. Proteome Res.">
        <title>Glycoproteomics analysis of human liver tissue by combination of multiple enzyme digestion and hydrazide chemistry.</title>
        <authorList>
            <person name="Chen R."/>
            <person name="Jiang X."/>
            <person name="Sun D."/>
            <person name="Han G."/>
            <person name="Wang F."/>
            <person name="Ye M."/>
            <person name="Wang L."/>
            <person name="Zou H."/>
        </authorList>
    </citation>
    <scope>GLYCOSYLATION [LARGE SCALE ANALYSIS] AT ASN-125</scope>
    <source>
        <tissue>Liver</tissue>
    </source>
</reference>
<reference key="23">
    <citation type="journal article" date="2009" name="Mol. Cancer Res.">
        <title>Activated platelets provide a functional microenvironment for the antiangiogenic fragment of histidine-rich glycoprotein.</title>
        <authorList>
            <person name="Thulin A."/>
            <person name="Ringvall M."/>
            <person name="Dimberg A."/>
            <person name="Karehed K."/>
            <person name="Vaisanen T."/>
            <person name="Vaisanen M.R."/>
            <person name="Hamad O."/>
            <person name="Wang J."/>
            <person name="Bjerkvig R."/>
            <person name="Nilsson B."/>
            <person name="Pihlajaniemi T."/>
            <person name="Akerud H."/>
            <person name="Pietras K."/>
            <person name="Jahnen-Dechent W."/>
            <person name="Siegbahn A."/>
            <person name="Olsson A.K."/>
        </authorList>
    </citation>
    <scope>FUNCTION</scope>
    <scope>PROTEOLYTIC PROCESSING</scope>
    <scope>IDENTIFICATION BY MASS SPECTROMETRY</scope>
    <scope>TISSUE SPECIFICITY</scope>
</reference>
<reference key="24">
    <citation type="journal article" date="2010" name="Int. J. Biochem. Cell Biol.">
        <title>Histidine-rich glycoprotein binds heparanase and regulates its enzymatic activity and cell surface interactions.</title>
        <authorList>
            <person name="Poon I.K."/>
            <person name="Yee D.Y."/>
            <person name="Jones A.L."/>
            <person name="Wood R.J."/>
            <person name="Davis D.S."/>
            <person name="Freeman C."/>
            <person name="Parish C.R."/>
            <person name="Hulett M.D."/>
        </authorList>
    </citation>
    <scope>INTERACTION WITH HPSE</scope>
</reference>
<reference key="25">
    <citation type="journal article" date="2010" name="J. Leukoc. Biol.">
        <title>Histidine-rich glycoprotein functions cooperatively with cell surface heparan sulfate on phagocytes to promote necrotic cell uptake.</title>
        <authorList>
            <person name="Poon I.K."/>
            <person name="Parish C.R."/>
            <person name="Hulett M.D."/>
        </authorList>
    </citation>
    <scope>FUNCTION</scope>
    <scope>HEPARIN- AND HEPARAN SULFATE-BINDING</scope>
</reference>
<reference key="26">
    <citation type="journal article" date="2011" name="Blood">
        <title>Histidine-rich glycoprotein binds factor XIIa with high affinity and inhibits contact-initiated coagulation.</title>
        <authorList>
            <person name="Macquarrie J.L."/>
            <person name="Stafford A.R."/>
            <person name="Yau J.W."/>
            <person name="Leslie B.A."/>
            <person name="Vu T.T."/>
            <person name="Fredenburgh J.C."/>
            <person name="Weitz J.I."/>
        </authorList>
    </citation>
    <scope>INTERACTION WITH F12</scope>
    <scope>IDENTIFICATION BY MASS SPECTROMETRY</scope>
    <scope>FUNCTION</scope>
</reference>
<reference key="27">
    <citation type="journal article" date="2011" name="Cancer Cell">
        <title>HRG inhibits tumor growth and metastasis by inducing macrophage polarization and vessel normalization through downregulation of PlGF.</title>
        <authorList>
            <person name="Rolny C."/>
            <person name="Mazzone M."/>
            <person name="Tugues S."/>
            <person name="Laoui D."/>
            <person name="Johansson I."/>
            <person name="Coulon C."/>
            <person name="Squadrito M.L."/>
            <person name="Segura I."/>
            <person name="Li X."/>
            <person name="Knevels E."/>
            <person name="Costa S."/>
            <person name="Vinckier S."/>
            <person name="Dresselaer T."/>
            <person name="Akerud P."/>
            <person name="De Mol M."/>
            <person name="Salomaki H."/>
            <person name="Phillipson M."/>
            <person name="Wyns S."/>
            <person name="Larsson E."/>
            <person name="Buysschaert I."/>
            <person name="Botling J."/>
            <person name="Himmelreich U."/>
            <person name="Van Ginderachter J.A."/>
            <person name="De Palma M."/>
            <person name="Dewerchin M."/>
            <person name="Claesson-Welsh L."/>
            <person name="Carmeliet P."/>
        </authorList>
    </citation>
    <scope>FUNCTION AS A TUMOR SUPPRESSOR</scope>
    <scope>SUBCELLULAR LOCATION</scope>
    <scope>TISSUE SPECIFICITY</scope>
</reference>
<reference key="28">
    <citation type="journal article" date="2014" name="J. Proteomics">
        <title>An enzyme assisted RP-RPLC approach for in-depth analysis of human liver phosphoproteome.</title>
        <authorList>
            <person name="Bian Y."/>
            <person name="Song C."/>
            <person name="Cheng K."/>
            <person name="Dong M."/>
            <person name="Wang F."/>
            <person name="Huang J."/>
            <person name="Sun D."/>
            <person name="Wang L."/>
            <person name="Ye M."/>
            <person name="Zou H."/>
        </authorList>
    </citation>
    <scope>IDENTIFICATION BY MASS SPECTROMETRY [LARGE SCALE ANALYSIS]</scope>
    <source>
        <tissue>Liver</tissue>
    </source>
</reference>
<reference key="29">
    <citation type="journal article" date="1998" name="Blood">
        <title>HRG Tokushima: molecular and cellular characterization of histidine-rich glycoprotein (HRG) deficiency.</title>
        <authorList>
            <person name="Shigekiyo T."/>
            <person name="Yoshida H."/>
            <person name="Matsumoto K."/>
            <person name="Azuma H."/>
            <person name="Wakabayashi S."/>
            <person name="Saito S."/>
            <person name="Fujikawa K."/>
            <person name="Koide T."/>
        </authorList>
    </citation>
    <scope>VARIANT THPH11 GLU-103</scope>
    <scope>CHARACTERIZATION OF VARIANT THPH11 GLU-103</scope>
</reference>
<reference key="30">
    <citation type="journal article" date="2000" name="Thromb. Haemost.">
        <title>Histidine-rich glycoprotein (HRG) Tokushima 2: novel HRG deficiency, molecular and cellular characterization.</title>
        <authorList>
            <person name="Shigekiyo T."/>
            <person name="Yoshida H."/>
            <person name="Kanagawa Y."/>
            <person name="Satoh K."/>
            <person name="Wakabayashi S."/>
            <person name="Matsumoto T."/>
            <person name="Koide T."/>
        </authorList>
    </citation>
    <scope>VARIANT THPH11 ARG-241</scope>
    <scope>CHARACTERIZATION OF VARIANT THPH11 ARG-241</scope>
</reference>
<comment type="function">
    <text evidence="6 7 9 10 11 13 14 16 17 18 19 21 22 23">Plasma glycoprotein that binds a number of ligands such as heme, heparin, heparan sulfate, thrombospondin, plasminogen, and divalent metal ions. Binds heparin and heparin/glycosaminoglycans in a zinc-dependent manner. Binds heparan sulfate on the surface of liver, lung, kidney and heart endothelial cells. Binds to N-sulfated polysaccharide chains on the surface of liver endothelial cells. Inhibits rosette formation. Acts as an adapter protein and is implicated in regulating many processes such as immune complex and pathogen clearance, cell chemotaxis, cell adhesion, angiogenesis, coagulation and fibrinolysis. Mediates clearance of necrotic cells through enhancing the phagocytosis of necrotic cells in a heparan sulfate-dependent pathway. This process can be regulated by the presence of certain HRG ligands such as heparin and zinc ions. Binds to IgG subclasses of immunoglobins containing kappa and lambda light chains with different affinities regulating their clearance and inhibiting the formation of insoluble immune complexes. Tethers plasminogen to the cell surface. Binds T-cells and alters the cell morphology. Modulates angiogenesis by blocking the CD6-mediated antiangiongenic effect of thrombospondins, THBS1 and THBS2. Acts as a regulator of the vascular endothelial growth factor (VEGF) signaling pathway; inhibits endothelial cell motility by reducing VEGF-induced complex formation between PXN/paxillin and ILK/integrin-linked protein kinase and by promoting inhibition of VEGF-induced tyrosine phosphorylation of focal adhesion kinases and alpha-actinins in endothelial cells. Also plays a role in the regulation of tumor angiogenesis and tumor immune surveillance. Normalizes tumor vessels and promotes antitumor immunity by polarizing tumor-associated macrophages, leading to decreased tumor growth and metastasis.</text>
</comment>
<comment type="cofactor">
    <cofactor evidence="13">
        <name>Zn(2+)</name>
        <dbReference type="ChEBI" id="CHEBI:29105"/>
    </cofactor>
</comment>
<comment type="subunit">
    <text evidence="1 4 6 10 11 16 18 20 23">Interacts (via the HRR domain) with TPM1; the interaction appears to contribute to the antiangiogenic properties of the HRR domain. Interacts with THBS2; the interaction blocks the antiangiogenic effect of THBS2 with CD36 (By similarity). Interacts with THBS1 (via the TSP type I repeats); the interaction blocks the antiangiogenic effect of THBS1 with CD3. Interacts with PLG (via its Kringle domains); the interaction tethers PLG to the cell surface and enhances its activation. Interacts with HPSE; the interaction is enhanced at acidic pH, partially inhibits binding of HPSE to cell surface receptors and modulates its enzymatic activity. Interacts (via the HRR domain) with TMP1; the interaction partially mediates the antiangiogenic properties of HRG. Interacts with kappa and lambda light chains of IgG molecules. Interacts with ATP5F1A; the interaction occurs on the surface of T-cells and alters their cell morphology in concert with CONA. Binds IgG molecules containing kappa and lambda light chains and inhibits the formation of insoluble immunoglobulin complexes. Interacts with F12; the interaction, which is enhanced in the presence of zinc ions and inhibited by heparin-binding to HRG, inhibits factor XII autoactivation and contact-initiated coagulation.</text>
</comment>
<comment type="interaction">
    <interactant intactId="EBI-3915012">
        <id>P04196</id>
    </interactant>
    <interactant intactId="EBI-3867333">
        <id>A8MQ03</id>
        <label>CYSRT1</label>
    </interactant>
    <organismsDiffer>false</organismsDiffer>
    <experiments>3</experiments>
</comment>
<comment type="interaction">
    <interactant intactId="EBI-3915012">
        <id>P04196</id>
    </interactant>
    <interactant intactId="EBI-947779">
        <id>Q96PM5</id>
        <label>RCHY1</label>
    </interactant>
    <organismsDiffer>false</organismsDiffer>
    <experiments>3</experiments>
</comment>
<comment type="interaction">
    <interactant intactId="EBI-3915012">
        <id>P04196</id>
    </interactant>
    <interactant intactId="EBI-10178530">
        <id>O76081-6</id>
        <label>RGS20</label>
    </interactant>
    <organismsDiffer>false</organismsDiffer>
    <experiments>3</experiments>
</comment>
<comment type="interaction">
    <interactant intactId="EBI-3915012">
        <id>P04196</id>
    </interactant>
    <interactant intactId="EBI-8852705">
        <id>Q99XU0</id>
        <label>SPy_2034</label>
    </interactant>
    <organismsDiffer>true</organismsDiffer>
    <experiments>4</experiments>
</comment>
<comment type="subcellular location">
    <subcellularLocation>
        <location evidence="22">Secreted</location>
    </subcellularLocation>
</comment>
<comment type="tissue specificity">
    <text evidence="9 19 22">Expressed in macrophages and in malignant cells. Expressed by the liver and secreted in plasma (at protein level).</text>
</comment>
<comment type="domain">
    <text>The His/Pro-rich (HRR) region contains approximately 12 tandem internal repeats of the 5-residue G[H/P][H/P]PH consensus sequence. HRR binds heparan sulfate and possesses antiangiogenic, antibacterial and antifungal properties through binding Candida cells, and preferentially lysing the ergosterol-containing liposomes at low pH. The tandem repeats also bind divalent metal ions and heme.</text>
</comment>
<comment type="domain">
    <text>The cystatin domains can also bind heparan sulfate. Binding is enhanced in the presence of zinc ions.</text>
</comment>
<comment type="PTM">
    <text evidence="9 18 19">Proteolytic cleavage produces several HRG fragments which are mostly disulfide-linked and, therefore, not released. Cleavage by plasmin is inhibited in the presence of heparin, zinc ions or in an acidic environment. Cleavage reduces binding of HRG to heparan sulfate, but enhances the ability of HRG to bind and tether plasminogen to the cell surface. On platelet activation, releases a 33 kDa antiangiogenic peptide which encompasses the HRR. Also cleaved in the C-terminal by plasmin.</text>
</comment>
<comment type="PTM">
    <text evidence="12 15 16">N-glycosylated.</text>
</comment>
<comment type="disease" evidence="5 24">
    <disease id="DI-02525">
        <name>Thrombophilia due to histidine-rich glycoprotein deficiency</name>
        <acronym>THPH11</acronym>
        <description>A hemostatic disorder characterized by a tendency to thrombosis.</description>
        <dbReference type="MIM" id="613116"/>
    </disease>
    <text>The disease is caused by variants affecting the gene represented in this entry.</text>
</comment>
<keyword id="KW-0037">Angiogenesis</keyword>
<keyword id="KW-0094">Blood coagulation</keyword>
<keyword id="KW-0145">Chemotaxis</keyword>
<keyword id="KW-0165">Cleavage on pair of basic residues</keyword>
<keyword id="KW-0186">Copper</keyword>
<keyword id="KW-0903">Direct protein sequencing</keyword>
<keyword id="KW-0225">Disease variant</keyword>
<keyword id="KW-1015">Disulfide bond</keyword>
<keyword id="KW-0280">Fibrinolysis</keyword>
<keyword id="KW-0325">Glycoprotein</keyword>
<keyword id="KW-0356">Hemostasis</keyword>
<keyword id="KW-0358">Heparin-binding</keyword>
<keyword id="KW-0479">Metal-binding</keyword>
<keyword id="KW-1267">Proteomics identification</keyword>
<keyword id="KW-1185">Reference proteome</keyword>
<keyword id="KW-0677">Repeat</keyword>
<keyword id="KW-0964">Secreted</keyword>
<keyword id="KW-0732">Signal</keyword>
<keyword id="KW-0792">Thrombophilia</keyword>
<keyword id="KW-0862">Zinc</keyword>
<name>HRG_HUMAN</name>
<dbReference type="EMBL" id="M13149">
    <property type="protein sequence ID" value="AAA52694.1"/>
    <property type="molecule type" value="mRNA"/>
</dbReference>
<dbReference type="EMBL" id="AB005803">
    <property type="protein sequence ID" value="BAA21613.1"/>
    <property type="molecule type" value="Genomic_DNA"/>
</dbReference>
<dbReference type="EMBL" id="CH471052">
    <property type="protein sequence ID" value="EAW78183.1"/>
    <property type="molecule type" value="Genomic_DNA"/>
</dbReference>
<dbReference type="EMBL" id="CH471052">
    <property type="protein sequence ID" value="EAW78184.1"/>
    <property type="molecule type" value="Genomic_DNA"/>
</dbReference>
<dbReference type="EMBL" id="BC069574">
    <property type="protein sequence ID" value="AAH69574.1"/>
    <property type="molecule type" value="mRNA"/>
</dbReference>
<dbReference type="EMBL" id="BC150591">
    <property type="protein sequence ID" value="AAI50592.1"/>
    <property type="molecule type" value="mRNA"/>
</dbReference>
<dbReference type="EMBL" id="Z17218">
    <property type="protein sequence ID" value="CAA78925.1"/>
    <property type="molecule type" value="Genomic_DNA"/>
</dbReference>
<dbReference type="CCDS" id="CCDS3280.1"/>
<dbReference type="PIR" id="A01287">
    <property type="entry name" value="KGHUGH"/>
</dbReference>
<dbReference type="RefSeq" id="NP_000403.1">
    <property type="nucleotide sequence ID" value="NM_000412.5"/>
</dbReference>
<dbReference type="SMR" id="P04196"/>
<dbReference type="BioGRID" id="109509">
    <property type="interactions" value="60"/>
</dbReference>
<dbReference type="CORUM" id="P04196"/>
<dbReference type="DIP" id="DIP-47264N"/>
<dbReference type="FunCoup" id="P04196">
    <property type="interactions" value="107"/>
</dbReference>
<dbReference type="IntAct" id="P04196">
    <property type="interactions" value="42"/>
</dbReference>
<dbReference type="MINT" id="P04196"/>
<dbReference type="STRING" id="9606.ENSP00000232003"/>
<dbReference type="DrugBank" id="DB14533">
    <property type="generic name" value="Zinc chloride"/>
</dbReference>
<dbReference type="DrugBank" id="DB14548">
    <property type="generic name" value="Zinc sulfate, unspecified form"/>
</dbReference>
<dbReference type="MEROPS" id="I25.022"/>
<dbReference type="MEROPS" id="I25.025"/>
<dbReference type="GlyConnect" id="805">
    <property type="glycosylation" value="26 N-Linked glycans (3 sites)"/>
</dbReference>
<dbReference type="GlyCosmos" id="P04196">
    <property type="glycosylation" value="7 sites, 34 glycans"/>
</dbReference>
<dbReference type="GlyGen" id="P04196">
    <property type="glycosylation" value="9 sites, 100 N-linked glycans (4 sites), 5 O-linked glycans (4 sites)"/>
</dbReference>
<dbReference type="iPTMnet" id="P04196"/>
<dbReference type="PhosphoSitePlus" id="P04196"/>
<dbReference type="BioMuta" id="HRG"/>
<dbReference type="DMDM" id="123523"/>
<dbReference type="jPOST" id="P04196"/>
<dbReference type="MassIVE" id="P04196"/>
<dbReference type="PaxDb" id="9606-ENSP00000232003"/>
<dbReference type="PeptideAtlas" id="P04196"/>
<dbReference type="PRIDE" id="P04196"/>
<dbReference type="ProteomicsDB" id="51675"/>
<dbReference type="Antibodypedia" id="33854">
    <property type="antibodies" value="330 antibodies from 31 providers"/>
</dbReference>
<dbReference type="DNASU" id="3273"/>
<dbReference type="Ensembl" id="ENST00000232003.5">
    <property type="protein sequence ID" value="ENSP00000232003.4"/>
    <property type="gene ID" value="ENSG00000113905.5"/>
</dbReference>
<dbReference type="GeneID" id="3273"/>
<dbReference type="KEGG" id="hsa:3273"/>
<dbReference type="MANE-Select" id="ENST00000232003.5">
    <property type="protein sequence ID" value="ENSP00000232003.4"/>
    <property type="RefSeq nucleotide sequence ID" value="NM_000412.5"/>
    <property type="RefSeq protein sequence ID" value="NP_000403.1"/>
</dbReference>
<dbReference type="UCSC" id="uc003fqq.5">
    <property type="organism name" value="human"/>
</dbReference>
<dbReference type="AGR" id="HGNC:5181"/>
<dbReference type="CTD" id="3273"/>
<dbReference type="DisGeNET" id="3273"/>
<dbReference type="GeneCards" id="HRG"/>
<dbReference type="HGNC" id="HGNC:5181">
    <property type="gene designation" value="HRG"/>
</dbReference>
<dbReference type="HPA" id="ENSG00000113905">
    <property type="expression patterns" value="Tissue enriched (liver)"/>
</dbReference>
<dbReference type="MalaCards" id="HRG"/>
<dbReference type="MIM" id="142640">
    <property type="type" value="gene"/>
</dbReference>
<dbReference type="MIM" id="613116">
    <property type="type" value="phenotype"/>
</dbReference>
<dbReference type="neXtProt" id="NX_P04196"/>
<dbReference type="OpenTargets" id="ENSG00000113905"/>
<dbReference type="Orphanet" id="217467">
    <property type="disease" value="Hereditary thrombophilia due to congenital histidine-rich (poly-L) glycoprotein deficiency"/>
</dbReference>
<dbReference type="PharmGKB" id="PA29455"/>
<dbReference type="VEuPathDB" id="HostDB:ENSG00000113905"/>
<dbReference type="eggNOG" id="ENOG502S50D">
    <property type="taxonomic scope" value="Eukaryota"/>
</dbReference>
<dbReference type="GeneTree" id="ENSGT00950000182930"/>
<dbReference type="HOGENOM" id="CLU_575637_0_0_1"/>
<dbReference type="InParanoid" id="P04196"/>
<dbReference type="OMA" id="GKGHFPF"/>
<dbReference type="OrthoDB" id="9941887at2759"/>
<dbReference type="PAN-GO" id="P04196">
    <property type="GO annotations" value="9 GO annotations based on evolutionary models"/>
</dbReference>
<dbReference type="PhylomeDB" id="P04196"/>
<dbReference type="TreeFam" id="TF333729"/>
<dbReference type="PathwayCommons" id="P04196"/>
<dbReference type="Reactome" id="R-HSA-114608">
    <property type="pathway name" value="Platelet degranulation"/>
</dbReference>
<dbReference type="Reactome" id="R-HSA-75205">
    <property type="pathway name" value="Dissolution of Fibrin Clot"/>
</dbReference>
<dbReference type="SignaLink" id="P04196"/>
<dbReference type="BioGRID-ORCS" id="3273">
    <property type="hits" value="6 hits in 1143 CRISPR screens"/>
</dbReference>
<dbReference type="ChiTaRS" id="HRG">
    <property type="organism name" value="human"/>
</dbReference>
<dbReference type="GeneWiki" id="HRG_(gene)"/>
<dbReference type="GenomeRNAi" id="3273"/>
<dbReference type="Pharos" id="P04196">
    <property type="development level" value="Tbio"/>
</dbReference>
<dbReference type="PRO" id="PR:P04196"/>
<dbReference type="Proteomes" id="UP000005640">
    <property type="component" value="Chromosome 3"/>
</dbReference>
<dbReference type="RNAct" id="P04196">
    <property type="molecule type" value="protein"/>
</dbReference>
<dbReference type="Bgee" id="ENSG00000113905">
    <property type="expression patterns" value="Expressed in liver and 119 other cell types or tissues"/>
</dbReference>
<dbReference type="GO" id="GO:0072562">
    <property type="term" value="C:blood microparticle"/>
    <property type="evidence" value="ECO:0007005"/>
    <property type="project" value="UniProtKB"/>
</dbReference>
<dbReference type="GO" id="GO:0009986">
    <property type="term" value="C:cell surface"/>
    <property type="evidence" value="ECO:0000314"/>
    <property type="project" value="UniProtKB"/>
</dbReference>
<dbReference type="GO" id="GO:0062023">
    <property type="term" value="C:collagen-containing extracellular matrix"/>
    <property type="evidence" value="ECO:0007005"/>
    <property type="project" value="BHF-UCL"/>
</dbReference>
<dbReference type="GO" id="GO:0070062">
    <property type="term" value="C:extracellular exosome"/>
    <property type="evidence" value="ECO:0007005"/>
    <property type="project" value="UniProtKB"/>
</dbReference>
<dbReference type="GO" id="GO:0005576">
    <property type="term" value="C:extracellular region"/>
    <property type="evidence" value="ECO:0000314"/>
    <property type="project" value="UniProtKB"/>
</dbReference>
<dbReference type="GO" id="GO:0005886">
    <property type="term" value="C:plasma membrane"/>
    <property type="evidence" value="ECO:0000304"/>
    <property type="project" value="Reactome"/>
</dbReference>
<dbReference type="GO" id="GO:0031093">
    <property type="term" value="C:platelet alpha granule lumen"/>
    <property type="evidence" value="ECO:0000304"/>
    <property type="project" value="Reactome"/>
</dbReference>
<dbReference type="GO" id="GO:0004869">
    <property type="term" value="F:cysteine-type endopeptidase inhibitor activity"/>
    <property type="evidence" value="ECO:0007669"/>
    <property type="project" value="InterPro"/>
</dbReference>
<dbReference type="GO" id="GO:0020037">
    <property type="term" value="F:heme binding"/>
    <property type="evidence" value="ECO:0000314"/>
    <property type="project" value="UniProtKB"/>
</dbReference>
<dbReference type="GO" id="GO:0043395">
    <property type="term" value="F:heparan sulfate proteoglycan binding"/>
    <property type="evidence" value="ECO:0000314"/>
    <property type="project" value="UniProtKB"/>
</dbReference>
<dbReference type="GO" id="GO:0008201">
    <property type="term" value="F:heparin binding"/>
    <property type="evidence" value="ECO:0000314"/>
    <property type="project" value="UniProtKB"/>
</dbReference>
<dbReference type="GO" id="GO:0019865">
    <property type="term" value="F:immunoglobulin binding"/>
    <property type="evidence" value="ECO:0000314"/>
    <property type="project" value="UniProtKB"/>
</dbReference>
<dbReference type="GO" id="GO:0046872">
    <property type="term" value="F:metal ion binding"/>
    <property type="evidence" value="ECO:0000314"/>
    <property type="project" value="UniProtKB"/>
</dbReference>
<dbReference type="GO" id="GO:0004867">
    <property type="term" value="F:serine-type endopeptidase inhibitor activity"/>
    <property type="evidence" value="ECO:0000318"/>
    <property type="project" value="GO_Central"/>
</dbReference>
<dbReference type="GO" id="GO:0005102">
    <property type="term" value="F:signaling receptor binding"/>
    <property type="evidence" value="ECO:0000314"/>
    <property type="project" value="UniProtKB"/>
</dbReference>
<dbReference type="GO" id="GO:0008270">
    <property type="term" value="F:zinc ion binding"/>
    <property type="evidence" value="ECO:0000314"/>
    <property type="project" value="UniProtKB"/>
</dbReference>
<dbReference type="GO" id="GO:0001525">
    <property type="term" value="P:angiogenesis"/>
    <property type="evidence" value="ECO:0007669"/>
    <property type="project" value="UniProtKB-KW"/>
</dbReference>
<dbReference type="GO" id="GO:0061844">
    <property type="term" value="P:antimicrobial humoral immune response mediated by antimicrobial peptide"/>
    <property type="evidence" value="ECO:0000314"/>
    <property type="project" value="UniProtKB"/>
</dbReference>
<dbReference type="GO" id="GO:0006935">
    <property type="term" value="P:chemotaxis"/>
    <property type="evidence" value="ECO:0007669"/>
    <property type="project" value="UniProtKB-KW"/>
</dbReference>
<dbReference type="GO" id="GO:0051838">
    <property type="term" value="P:cytolysis by host of symbiont cells"/>
    <property type="evidence" value="ECO:0000314"/>
    <property type="project" value="UniProtKB"/>
</dbReference>
<dbReference type="GO" id="GO:0050832">
    <property type="term" value="P:defense response to fungus"/>
    <property type="evidence" value="ECO:0000314"/>
    <property type="project" value="UniProtKB"/>
</dbReference>
<dbReference type="GO" id="GO:0042730">
    <property type="term" value="P:fibrinolysis"/>
    <property type="evidence" value="ECO:0007669"/>
    <property type="project" value="UniProtKB-KW"/>
</dbReference>
<dbReference type="GO" id="GO:0016525">
    <property type="term" value="P:negative regulation of angiogenesis"/>
    <property type="evidence" value="ECO:0000314"/>
    <property type="project" value="UniProtKB"/>
</dbReference>
<dbReference type="GO" id="GO:0043537">
    <property type="term" value="P:negative regulation of blood vessel endothelial cell migration"/>
    <property type="evidence" value="ECO:0000250"/>
    <property type="project" value="UniProtKB"/>
</dbReference>
<dbReference type="GO" id="GO:0007162">
    <property type="term" value="P:negative regulation of cell adhesion"/>
    <property type="evidence" value="ECO:0000314"/>
    <property type="project" value="UniProtKB"/>
</dbReference>
<dbReference type="GO" id="GO:0033629">
    <property type="term" value="P:negative regulation of cell adhesion mediated by integrin"/>
    <property type="evidence" value="ECO:0000314"/>
    <property type="project" value="UniProtKB"/>
</dbReference>
<dbReference type="GO" id="GO:0030308">
    <property type="term" value="P:negative regulation of cell growth"/>
    <property type="evidence" value="ECO:0000314"/>
    <property type="project" value="UniProtKB"/>
</dbReference>
<dbReference type="GO" id="GO:0008285">
    <property type="term" value="P:negative regulation of cell population proliferation"/>
    <property type="evidence" value="ECO:0000314"/>
    <property type="project" value="UniProtKB"/>
</dbReference>
<dbReference type="GO" id="GO:2001027">
    <property type="term" value="P:negative regulation of endothelial cell chemotaxis"/>
    <property type="evidence" value="ECO:0000314"/>
    <property type="project" value="UniProtKB"/>
</dbReference>
<dbReference type="GO" id="GO:0051918">
    <property type="term" value="P:negative regulation of fibrinolysis"/>
    <property type="evidence" value="ECO:0000318"/>
    <property type="project" value="GO_Central"/>
</dbReference>
<dbReference type="GO" id="GO:0010593">
    <property type="term" value="P:negative regulation of lamellipodium assembly"/>
    <property type="evidence" value="ECO:0000314"/>
    <property type="project" value="UniProtKB"/>
</dbReference>
<dbReference type="GO" id="GO:1900747">
    <property type="term" value="P:negative regulation of vascular endothelial growth factor signaling pathway"/>
    <property type="evidence" value="ECO:0000314"/>
    <property type="project" value="UniProtKB"/>
</dbReference>
<dbReference type="GO" id="GO:0030168">
    <property type="term" value="P:platelet activation"/>
    <property type="evidence" value="ECO:0000314"/>
    <property type="project" value="UniProtKB"/>
</dbReference>
<dbReference type="GO" id="GO:0043065">
    <property type="term" value="P:positive regulation of apoptotic process"/>
    <property type="evidence" value="ECO:0000314"/>
    <property type="project" value="UniProtKB"/>
</dbReference>
<dbReference type="GO" id="GO:2000504">
    <property type="term" value="P:positive regulation of blood vessel remodeling"/>
    <property type="evidence" value="ECO:0000314"/>
    <property type="project" value="UniProtKB"/>
</dbReference>
<dbReference type="GO" id="GO:0051894">
    <property type="term" value="P:positive regulation of focal adhesion assembly"/>
    <property type="evidence" value="ECO:0000314"/>
    <property type="project" value="UniProtKB"/>
</dbReference>
<dbReference type="GO" id="GO:0002839">
    <property type="term" value="P:positive regulation of immune response to tumor cell"/>
    <property type="evidence" value="ECO:0000314"/>
    <property type="project" value="UniProtKB"/>
</dbReference>
<dbReference type="GO" id="GO:0032956">
    <property type="term" value="P:regulation of actin cytoskeleton organization"/>
    <property type="evidence" value="ECO:0000314"/>
    <property type="project" value="UniProtKB"/>
</dbReference>
<dbReference type="GO" id="GO:0030193">
    <property type="term" value="P:regulation of blood coagulation"/>
    <property type="evidence" value="ECO:0000314"/>
    <property type="project" value="UniProtKB"/>
</dbReference>
<dbReference type="GO" id="GO:0010468">
    <property type="term" value="P:regulation of gene expression"/>
    <property type="evidence" value="ECO:0000314"/>
    <property type="project" value="UniProtKB"/>
</dbReference>
<dbReference type="GO" id="GO:0050730">
    <property type="term" value="P:regulation of peptidyl-tyrosine phosphorylation"/>
    <property type="evidence" value="ECO:0000314"/>
    <property type="project" value="UniProtKB"/>
</dbReference>
<dbReference type="GO" id="GO:0010543">
    <property type="term" value="P:regulation of platelet activation"/>
    <property type="evidence" value="ECO:0000250"/>
    <property type="project" value="UniProtKB"/>
</dbReference>
<dbReference type="GO" id="GO:0043254">
    <property type="term" value="P:regulation of protein-containing complex assembly"/>
    <property type="evidence" value="ECO:0000314"/>
    <property type="project" value="UniProtKB"/>
</dbReference>
<dbReference type="CDD" id="cd00042">
    <property type="entry name" value="CY"/>
    <property type="match status" value="1"/>
</dbReference>
<dbReference type="FunFam" id="3.10.450.10:FF:000005">
    <property type="entry name" value="Histidine-rich glycoprotein"/>
    <property type="match status" value="1"/>
</dbReference>
<dbReference type="FunFam" id="3.10.450.10:FF:000015">
    <property type="entry name" value="Histidine-rich glycoprotein"/>
    <property type="match status" value="1"/>
</dbReference>
<dbReference type="Gene3D" id="3.10.450.10">
    <property type="match status" value="2"/>
</dbReference>
<dbReference type="InterPro" id="IPR000010">
    <property type="entry name" value="Cystatin_dom"/>
</dbReference>
<dbReference type="InterPro" id="IPR046350">
    <property type="entry name" value="Cystatin_sf"/>
</dbReference>
<dbReference type="InterPro" id="IPR050735">
    <property type="entry name" value="Kininogen_Fetuin_HRG"/>
</dbReference>
<dbReference type="PANTHER" id="PTHR13814">
    <property type="entry name" value="FETUIN"/>
    <property type="match status" value="1"/>
</dbReference>
<dbReference type="PANTHER" id="PTHR13814:SF3">
    <property type="entry name" value="HISTIDINE-RICH GLYCOPROTEIN"/>
    <property type="match status" value="1"/>
</dbReference>
<dbReference type="Pfam" id="PF00031">
    <property type="entry name" value="Cystatin"/>
    <property type="match status" value="1"/>
</dbReference>
<dbReference type="SMART" id="SM00043">
    <property type="entry name" value="CY"/>
    <property type="match status" value="2"/>
</dbReference>
<dbReference type="SUPFAM" id="SSF54403">
    <property type="entry name" value="Cystatin/monellin"/>
    <property type="match status" value="2"/>
</dbReference>
<evidence type="ECO:0000250" key="1"/>
<evidence type="ECO:0000255" key="2"/>
<evidence type="ECO:0000256" key="3">
    <source>
        <dbReference type="SAM" id="MobiDB-lite"/>
    </source>
</evidence>
<evidence type="ECO:0000269" key="4">
    <source>
    </source>
</evidence>
<evidence type="ECO:0000269" key="5">
    <source>
    </source>
</evidence>
<evidence type="ECO:0000269" key="6">
    <source>
    </source>
</evidence>
<evidence type="ECO:0000269" key="7">
    <source>
    </source>
</evidence>
<evidence type="ECO:0000269" key="8">
    <source>
    </source>
</evidence>
<evidence type="ECO:0000269" key="9">
    <source>
    </source>
</evidence>
<evidence type="ECO:0000269" key="10">
    <source>
    </source>
</evidence>
<evidence type="ECO:0000269" key="11">
    <source>
    </source>
</evidence>
<evidence type="ECO:0000269" key="12">
    <source>
    </source>
</evidence>
<evidence type="ECO:0000269" key="13">
    <source>
    </source>
</evidence>
<evidence type="ECO:0000269" key="14">
    <source>
    </source>
</evidence>
<evidence type="ECO:0000269" key="15">
    <source>
    </source>
</evidence>
<evidence type="ECO:0000269" key="16">
    <source>
    </source>
</evidence>
<evidence type="ECO:0000269" key="17">
    <source>
    </source>
</evidence>
<evidence type="ECO:0000269" key="18">
    <source>
    </source>
</evidence>
<evidence type="ECO:0000269" key="19">
    <source>
    </source>
</evidence>
<evidence type="ECO:0000269" key="20">
    <source>
    </source>
</evidence>
<evidence type="ECO:0000269" key="21">
    <source>
    </source>
</evidence>
<evidence type="ECO:0000269" key="22">
    <source>
    </source>
</evidence>
<evidence type="ECO:0000269" key="23">
    <source>
    </source>
</evidence>
<evidence type="ECO:0000269" key="24">
    <source>
    </source>
</evidence>
<protein>
    <recommendedName>
        <fullName>Histidine-rich glycoprotein</fullName>
    </recommendedName>
    <alternativeName>
        <fullName>Histidine-proline-rich glycoprotein</fullName>
        <shortName>HPRG</shortName>
    </alternativeName>
</protein>
<gene>
    <name type="primary">HRG</name>
</gene>
<organism>
    <name type="scientific">Homo sapiens</name>
    <name type="common">Human</name>
    <dbReference type="NCBI Taxonomy" id="9606"/>
    <lineage>
        <taxon>Eukaryota</taxon>
        <taxon>Metazoa</taxon>
        <taxon>Chordata</taxon>
        <taxon>Craniata</taxon>
        <taxon>Vertebrata</taxon>
        <taxon>Euteleostomi</taxon>
        <taxon>Mammalia</taxon>
        <taxon>Eutheria</taxon>
        <taxon>Euarchontoglires</taxon>
        <taxon>Primates</taxon>
        <taxon>Haplorrhini</taxon>
        <taxon>Catarrhini</taxon>
        <taxon>Hominidae</taxon>
        <taxon>Homo</taxon>
    </lineage>
</organism>
<feature type="signal peptide" evidence="8">
    <location>
        <begin position="1"/>
        <end position="18"/>
    </location>
</feature>
<feature type="chain" id="PRO_0000006709" description="Histidine-rich glycoprotein">
    <location>
        <begin position="19"/>
        <end position="525"/>
    </location>
</feature>
<feature type="domain" description="Cystatin 1">
    <location>
        <begin position="19"/>
        <end position="136"/>
    </location>
</feature>
<feature type="domain" description="Cystatin 2">
    <location>
        <begin position="137"/>
        <end position="254"/>
    </location>
</feature>
<feature type="region of interest" description="Interaction with ATP5F1A" evidence="16">
    <location>
        <begin position="41"/>
        <end position="84"/>
    </location>
</feature>
<feature type="region of interest" description="Disordered" evidence="3">
    <location>
        <begin position="252"/>
        <end position="407"/>
    </location>
</feature>
<feature type="region of interest" description="Necessary for endothelial cell focal adhesions and anti-angiogenic activities">
    <location>
        <begin position="348"/>
        <end position="382"/>
    </location>
</feature>
<feature type="compositionally biased region" description="Basic residues" evidence="3">
    <location>
        <begin position="284"/>
        <end position="293"/>
    </location>
</feature>
<feature type="compositionally biased region" description="Pro residues" evidence="3">
    <location>
        <begin position="310"/>
        <end position="320"/>
    </location>
</feature>
<feature type="compositionally biased region" description="Polar residues" evidence="3">
    <location>
        <begin position="323"/>
        <end position="348"/>
    </location>
</feature>
<feature type="compositionally biased region" description="Basic residues" evidence="3">
    <location>
        <begin position="351"/>
        <end position="371"/>
    </location>
</feature>
<feature type="compositionally biased region" description="Basic residues" evidence="3">
    <location>
        <begin position="379"/>
        <end position="407"/>
    </location>
</feature>
<feature type="site" description="Cleavage; by plasmin" evidence="1">
    <location>
        <begin position="439"/>
        <end position="440"/>
    </location>
</feature>
<feature type="glycosylation site" description="N-linked (GlcNAc...) asparagine" evidence="12 16">
    <location>
        <position position="63"/>
    </location>
</feature>
<feature type="glycosylation site" description="N-linked (GlcNAc...) asparagine" evidence="12 15">
    <location>
        <position position="125"/>
    </location>
</feature>
<feature type="glycosylation site" description="N-linked (GlcNAc...) asparagine" evidence="12">
    <location>
        <position position="344"/>
    </location>
</feature>
<feature type="glycosylation site" description="N-linked (GlcNAc...) asparagine" evidence="2">
    <location>
        <position position="345"/>
    </location>
</feature>
<feature type="disulfide bond" evidence="1">
    <location>
        <begin position="24"/>
        <end position="504"/>
    </location>
</feature>
<feature type="disulfide bond" evidence="1">
    <location>
        <begin position="78"/>
        <end position="89"/>
    </location>
</feature>
<feature type="disulfide bond" evidence="1">
    <location>
        <begin position="105"/>
        <end position="126"/>
    </location>
</feature>
<feature type="disulfide bond" evidence="1">
    <location>
        <begin position="203"/>
        <end position="417"/>
    </location>
</feature>
<feature type="disulfide bond" evidence="1">
    <location>
        <begin position="218"/>
        <end position="241"/>
    </location>
</feature>
<feature type="sequence variant" id="VAR_048856" description="In dbSNP:rs4516605.">
    <original>S</original>
    <variation>L</variation>
    <location>
        <position position="79"/>
    </location>
</feature>
<feature type="sequence variant" id="VAR_063000" description="In THPH11; HRG Tokushima 1; results in increased intracellular degradation and reduced protein secretion; dbSNP:rs121918122." evidence="24">
    <original>G</original>
    <variation>E</variation>
    <location>
        <position position="103"/>
    </location>
</feature>
<feature type="sequence variant" id="VAR_020488" description="In dbSNP:rs3733008.">
    <original>D</original>
    <variation>G</variation>
    <location>
        <position position="118"/>
    </location>
</feature>
<feature type="sequence variant" id="VAR_022080" description="In dbSNP:rs10770.">
    <original>I</original>
    <variation>T</variation>
    <location>
        <position position="180"/>
    </location>
</feature>
<feature type="sequence variant" id="VAR_014528" description="In dbSNP:rs9898.">
    <original>P</original>
    <variation>S</variation>
    <location>
        <position position="204"/>
    </location>
</feature>
<feature type="sequence variant" id="VAR_063001" description="In THPH11; HRG Tokushima 2; results in increased intracellular degradation and reduced protein secretion; dbSNP:rs2276804." evidence="5">
    <original>C</original>
    <variation>R</variation>
    <location>
        <position position="241"/>
    </location>
</feature>
<feature type="sequence variant" id="VAR_020489" description="In dbSNP:rs2228243.">
    <original>H</original>
    <variation>R</variation>
    <location>
        <position position="340"/>
    </location>
</feature>
<feature type="sequence variant" id="VAR_024427" description="In dbSNP:rs2229331.">
    <original>G</original>
    <variation>R</variation>
    <location>
        <position position="436"/>
    </location>
</feature>
<feature type="sequence variant" id="VAR_024428" description="In dbSNP:rs1042445.">
    <original>R</original>
    <variation>C</variation>
    <location>
        <position position="448"/>
    </location>
</feature>
<feature type="sequence variant" id="VAR_024429" description="In dbSNP:rs1042464.">
    <original>N</original>
    <variation>I</variation>
    <location>
        <position position="493"/>
    </location>
</feature>